<name>PTR49_ARATH</name>
<proteinExistence type="evidence at transcript level"/>
<feature type="chain" id="PRO_0000399983" description="Protein NRT1/ PTR FAMILY 6.1">
    <location>
        <begin position="1"/>
        <end position="624"/>
    </location>
</feature>
<feature type="transmembrane region" description="Helical" evidence="3">
    <location>
        <begin position="83"/>
        <end position="100"/>
    </location>
</feature>
<feature type="transmembrane region" description="Helical" evidence="3">
    <location>
        <begin position="114"/>
        <end position="134"/>
    </location>
</feature>
<feature type="transmembrane region" description="Helical" evidence="3">
    <location>
        <begin position="139"/>
        <end position="159"/>
    </location>
</feature>
<feature type="transmembrane region" description="Helical" evidence="3">
    <location>
        <begin position="184"/>
        <end position="204"/>
    </location>
</feature>
<feature type="transmembrane region" description="Helical" evidence="3">
    <location>
        <begin position="230"/>
        <end position="250"/>
    </location>
</feature>
<feature type="transmembrane region" description="Helical" evidence="3">
    <location>
        <begin position="258"/>
        <end position="278"/>
    </location>
</feature>
<feature type="transmembrane region" description="Helical" evidence="3">
    <location>
        <begin position="378"/>
        <end position="398"/>
    </location>
</feature>
<feature type="transmembrane region" description="Helical" evidence="3">
    <location>
        <begin position="422"/>
        <end position="442"/>
    </location>
</feature>
<feature type="transmembrane region" description="Helical" evidence="3">
    <location>
        <begin position="459"/>
        <end position="479"/>
    </location>
</feature>
<feature type="transmembrane region" description="Helical" evidence="3">
    <location>
        <begin position="504"/>
        <end position="524"/>
    </location>
</feature>
<feature type="transmembrane region" description="Helical" evidence="3">
    <location>
        <begin position="537"/>
        <end position="557"/>
    </location>
</feature>
<feature type="transmembrane region" description="Helical" evidence="3">
    <location>
        <begin position="585"/>
        <end position="605"/>
    </location>
</feature>
<feature type="region of interest" description="Disordered" evidence="4">
    <location>
        <begin position="1"/>
        <end position="20"/>
    </location>
</feature>
<feature type="modified residue" description="Phosphothreonine" evidence="2">
    <location>
        <position position="138"/>
    </location>
</feature>
<evidence type="ECO:0000250" key="1"/>
<evidence type="ECO:0000250" key="2">
    <source>
        <dbReference type="UniProtKB" id="Q05085"/>
    </source>
</evidence>
<evidence type="ECO:0000255" key="3"/>
<evidence type="ECO:0000256" key="4">
    <source>
        <dbReference type="SAM" id="MobiDB-lite"/>
    </source>
</evidence>
<evidence type="ECO:0000269" key="5">
    <source>
    </source>
</evidence>
<evidence type="ECO:0000305" key="6"/>
<comment type="subcellular location">
    <subcellularLocation>
        <location evidence="1">Membrane</location>
        <topology evidence="1">Multi-pass membrane protein</topology>
    </subcellularLocation>
</comment>
<comment type="tissue specificity">
    <text evidence="5">Expressed in flower and siliques.</text>
</comment>
<comment type="similarity">
    <text evidence="6">Belongs to the major facilitator superfamily. Proton-dependent oligopeptide transporter (POT/PTR) (TC 2.A.17) family.</text>
</comment>
<organism>
    <name type="scientific">Arabidopsis thaliana</name>
    <name type="common">Mouse-ear cress</name>
    <dbReference type="NCBI Taxonomy" id="3702"/>
    <lineage>
        <taxon>Eukaryota</taxon>
        <taxon>Viridiplantae</taxon>
        <taxon>Streptophyta</taxon>
        <taxon>Embryophyta</taxon>
        <taxon>Tracheophyta</taxon>
        <taxon>Spermatophyta</taxon>
        <taxon>Magnoliopsida</taxon>
        <taxon>eudicotyledons</taxon>
        <taxon>Gunneridae</taxon>
        <taxon>Pentapetalae</taxon>
        <taxon>rosids</taxon>
        <taxon>malvids</taxon>
        <taxon>Brassicales</taxon>
        <taxon>Brassicaceae</taxon>
        <taxon>Camelineae</taxon>
        <taxon>Arabidopsis</taxon>
    </lineage>
</organism>
<dbReference type="EMBL" id="AL163572">
    <property type="protein sequence ID" value="CAB87147.1"/>
    <property type="molecule type" value="Genomic_DNA"/>
</dbReference>
<dbReference type="EMBL" id="CP002688">
    <property type="protein sequence ID" value="AED91890.1"/>
    <property type="molecule type" value="Genomic_DNA"/>
</dbReference>
<dbReference type="EMBL" id="AY072338">
    <property type="protein sequence ID" value="AAL61945.1"/>
    <property type="molecule type" value="mRNA"/>
</dbReference>
<dbReference type="EMBL" id="AY128754">
    <property type="protein sequence ID" value="AAM91154.1"/>
    <property type="molecule type" value="mRNA"/>
</dbReference>
<dbReference type="PIR" id="T48587">
    <property type="entry name" value="T48587"/>
</dbReference>
<dbReference type="RefSeq" id="NP_196844.1">
    <property type="nucleotide sequence ID" value="NM_121343.5"/>
</dbReference>
<dbReference type="SMR" id="Q9LYR6"/>
<dbReference type="BioGRID" id="16459">
    <property type="interactions" value="31"/>
</dbReference>
<dbReference type="FunCoup" id="Q9LYR6">
    <property type="interactions" value="1852"/>
</dbReference>
<dbReference type="IntAct" id="Q9LYR6">
    <property type="interactions" value="31"/>
</dbReference>
<dbReference type="STRING" id="3702.Q9LYR6"/>
<dbReference type="iPTMnet" id="Q9LYR6"/>
<dbReference type="PaxDb" id="3702-AT5G13400.1"/>
<dbReference type="ProteomicsDB" id="226445"/>
<dbReference type="EnsemblPlants" id="AT5G13400.1">
    <property type="protein sequence ID" value="AT5G13400.1"/>
    <property type="gene ID" value="AT5G13400"/>
</dbReference>
<dbReference type="GeneID" id="831181"/>
<dbReference type="Gramene" id="AT5G13400.1">
    <property type="protein sequence ID" value="AT5G13400.1"/>
    <property type="gene ID" value="AT5G13400"/>
</dbReference>
<dbReference type="KEGG" id="ath:AT5G13400"/>
<dbReference type="Araport" id="AT5G13400"/>
<dbReference type="TAIR" id="AT5G13400"/>
<dbReference type="eggNOG" id="KOG1237">
    <property type="taxonomic scope" value="Eukaryota"/>
</dbReference>
<dbReference type="HOGENOM" id="CLU_009313_4_0_1"/>
<dbReference type="InParanoid" id="Q9LYR6"/>
<dbReference type="OMA" id="HGFEFNF"/>
<dbReference type="PhylomeDB" id="Q9LYR6"/>
<dbReference type="PRO" id="PR:Q9LYR6"/>
<dbReference type="Proteomes" id="UP000006548">
    <property type="component" value="Chromosome 5"/>
</dbReference>
<dbReference type="ExpressionAtlas" id="Q9LYR6">
    <property type="expression patterns" value="baseline and differential"/>
</dbReference>
<dbReference type="GO" id="GO:0016020">
    <property type="term" value="C:membrane"/>
    <property type="evidence" value="ECO:0007669"/>
    <property type="project" value="UniProtKB-SubCell"/>
</dbReference>
<dbReference type="GO" id="GO:0022857">
    <property type="term" value="F:transmembrane transporter activity"/>
    <property type="evidence" value="ECO:0007669"/>
    <property type="project" value="InterPro"/>
</dbReference>
<dbReference type="GO" id="GO:0006857">
    <property type="term" value="P:oligopeptide transport"/>
    <property type="evidence" value="ECO:0007669"/>
    <property type="project" value="InterPro"/>
</dbReference>
<dbReference type="CDD" id="cd17351">
    <property type="entry name" value="MFS_NPF"/>
    <property type="match status" value="1"/>
</dbReference>
<dbReference type="Gene3D" id="1.20.1250.20">
    <property type="entry name" value="MFS general substrate transporter like domains"/>
    <property type="match status" value="1"/>
</dbReference>
<dbReference type="InterPro" id="IPR036259">
    <property type="entry name" value="MFS_trans_sf"/>
</dbReference>
<dbReference type="InterPro" id="IPR000109">
    <property type="entry name" value="POT_fam"/>
</dbReference>
<dbReference type="InterPro" id="IPR018456">
    <property type="entry name" value="PTR2_symporter_CS"/>
</dbReference>
<dbReference type="PANTHER" id="PTHR11654">
    <property type="entry name" value="OLIGOPEPTIDE TRANSPORTER-RELATED"/>
    <property type="match status" value="1"/>
</dbReference>
<dbReference type="Pfam" id="PF00854">
    <property type="entry name" value="PTR2"/>
    <property type="match status" value="1"/>
</dbReference>
<dbReference type="SUPFAM" id="SSF103473">
    <property type="entry name" value="MFS general substrate transporter"/>
    <property type="match status" value="1"/>
</dbReference>
<dbReference type="PROSITE" id="PS01022">
    <property type="entry name" value="PTR2_1"/>
    <property type="match status" value="1"/>
</dbReference>
<gene>
    <name type="primary">NPF6.1</name>
    <name type="ordered locus">At5g13400</name>
    <name type="ORF">T22N19.50</name>
</gene>
<accession>Q9LYR6</accession>
<protein>
    <recommendedName>
        <fullName>Protein NRT1/ PTR FAMILY 6.1</fullName>
        <shortName>AtNPF6.1</shortName>
    </recommendedName>
</protein>
<reference key="1">
    <citation type="journal article" date="2000" name="Nature">
        <title>Sequence and analysis of chromosome 5 of the plant Arabidopsis thaliana.</title>
        <authorList>
            <person name="Tabata S."/>
            <person name="Kaneko T."/>
            <person name="Nakamura Y."/>
            <person name="Kotani H."/>
            <person name="Kato T."/>
            <person name="Asamizu E."/>
            <person name="Miyajima N."/>
            <person name="Sasamoto S."/>
            <person name="Kimura T."/>
            <person name="Hosouchi T."/>
            <person name="Kawashima K."/>
            <person name="Kohara M."/>
            <person name="Matsumoto M."/>
            <person name="Matsuno A."/>
            <person name="Muraki A."/>
            <person name="Nakayama S."/>
            <person name="Nakazaki N."/>
            <person name="Naruo K."/>
            <person name="Okumura S."/>
            <person name="Shinpo S."/>
            <person name="Takeuchi C."/>
            <person name="Wada T."/>
            <person name="Watanabe A."/>
            <person name="Yamada M."/>
            <person name="Yasuda M."/>
            <person name="Sato S."/>
            <person name="de la Bastide M."/>
            <person name="Huang E."/>
            <person name="Spiegel L."/>
            <person name="Gnoj L."/>
            <person name="O'Shaughnessy A."/>
            <person name="Preston R."/>
            <person name="Habermann K."/>
            <person name="Murray J."/>
            <person name="Johnson D."/>
            <person name="Rohlfing T."/>
            <person name="Nelson J."/>
            <person name="Stoneking T."/>
            <person name="Pepin K."/>
            <person name="Spieth J."/>
            <person name="Sekhon M."/>
            <person name="Armstrong J."/>
            <person name="Becker M."/>
            <person name="Belter E."/>
            <person name="Cordum H."/>
            <person name="Cordes M."/>
            <person name="Courtney L."/>
            <person name="Courtney W."/>
            <person name="Dante M."/>
            <person name="Du H."/>
            <person name="Edwards J."/>
            <person name="Fryman J."/>
            <person name="Haakensen B."/>
            <person name="Lamar E."/>
            <person name="Latreille P."/>
            <person name="Leonard S."/>
            <person name="Meyer R."/>
            <person name="Mulvaney E."/>
            <person name="Ozersky P."/>
            <person name="Riley A."/>
            <person name="Strowmatt C."/>
            <person name="Wagner-McPherson C."/>
            <person name="Wollam A."/>
            <person name="Yoakum M."/>
            <person name="Bell M."/>
            <person name="Dedhia N."/>
            <person name="Parnell L."/>
            <person name="Shah R."/>
            <person name="Rodriguez M."/>
            <person name="Hoon See L."/>
            <person name="Vil D."/>
            <person name="Baker J."/>
            <person name="Kirchoff K."/>
            <person name="Toth K."/>
            <person name="King L."/>
            <person name="Bahret A."/>
            <person name="Miller B."/>
            <person name="Marra M.A."/>
            <person name="Martienssen R."/>
            <person name="McCombie W.R."/>
            <person name="Wilson R.K."/>
            <person name="Murphy G."/>
            <person name="Bancroft I."/>
            <person name="Volckaert G."/>
            <person name="Wambutt R."/>
            <person name="Duesterhoeft A."/>
            <person name="Stiekema W."/>
            <person name="Pohl T."/>
            <person name="Entian K.-D."/>
            <person name="Terryn N."/>
            <person name="Hartley N."/>
            <person name="Bent E."/>
            <person name="Johnson S."/>
            <person name="Langham S.-A."/>
            <person name="McCullagh B."/>
            <person name="Robben J."/>
            <person name="Grymonprez B."/>
            <person name="Zimmermann W."/>
            <person name="Ramsperger U."/>
            <person name="Wedler H."/>
            <person name="Balke K."/>
            <person name="Wedler E."/>
            <person name="Peters S."/>
            <person name="van Staveren M."/>
            <person name="Dirkse W."/>
            <person name="Mooijman P."/>
            <person name="Klein Lankhorst R."/>
            <person name="Weitzenegger T."/>
            <person name="Bothe G."/>
            <person name="Rose M."/>
            <person name="Hauf J."/>
            <person name="Berneiser S."/>
            <person name="Hempel S."/>
            <person name="Feldpausch M."/>
            <person name="Lamberth S."/>
            <person name="Villarroel R."/>
            <person name="Gielen J."/>
            <person name="Ardiles W."/>
            <person name="Bents O."/>
            <person name="Lemcke K."/>
            <person name="Kolesov G."/>
            <person name="Mayer K.F.X."/>
            <person name="Rudd S."/>
            <person name="Schoof H."/>
            <person name="Schueller C."/>
            <person name="Zaccaria P."/>
            <person name="Mewes H.-W."/>
            <person name="Bevan M."/>
            <person name="Fransz P.F."/>
        </authorList>
    </citation>
    <scope>NUCLEOTIDE SEQUENCE [LARGE SCALE GENOMIC DNA]</scope>
    <source>
        <strain>cv. Columbia</strain>
    </source>
</reference>
<reference key="2">
    <citation type="journal article" date="2017" name="Plant J.">
        <title>Araport11: a complete reannotation of the Arabidopsis thaliana reference genome.</title>
        <authorList>
            <person name="Cheng C.Y."/>
            <person name="Krishnakumar V."/>
            <person name="Chan A.P."/>
            <person name="Thibaud-Nissen F."/>
            <person name="Schobel S."/>
            <person name="Town C.D."/>
        </authorList>
    </citation>
    <scope>GENOME REANNOTATION</scope>
    <source>
        <strain>cv. Columbia</strain>
    </source>
</reference>
<reference key="3">
    <citation type="journal article" date="2003" name="Science">
        <title>Empirical analysis of transcriptional activity in the Arabidopsis genome.</title>
        <authorList>
            <person name="Yamada K."/>
            <person name="Lim J."/>
            <person name="Dale J.M."/>
            <person name="Chen H."/>
            <person name="Shinn P."/>
            <person name="Palm C.J."/>
            <person name="Southwick A.M."/>
            <person name="Wu H.C."/>
            <person name="Kim C.J."/>
            <person name="Nguyen M."/>
            <person name="Pham P.K."/>
            <person name="Cheuk R.F."/>
            <person name="Karlin-Newmann G."/>
            <person name="Liu S.X."/>
            <person name="Lam B."/>
            <person name="Sakano H."/>
            <person name="Wu T."/>
            <person name="Yu G."/>
            <person name="Miranda M."/>
            <person name="Quach H.L."/>
            <person name="Tripp M."/>
            <person name="Chang C.H."/>
            <person name="Lee J.M."/>
            <person name="Toriumi M.J."/>
            <person name="Chan M.M."/>
            <person name="Tang C.C."/>
            <person name="Onodera C.S."/>
            <person name="Deng J.M."/>
            <person name="Akiyama K."/>
            <person name="Ansari Y."/>
            <person name="Arakawa T."/>
            <person name="Banh J."/>
            <person name="Banno F."/>
            <person name="Bowser L."/>
            <person name="Brooks S.Y."/>
            <person name="Carninci P."/>
            <person name="Chao Q."/>
            <person name="Choy N."/>
            <person name="Enju A."/>
            <person name="Goldsmith A.D."/>
            <person name="Gurjal M."/>
            <person name="Hansen N.F."/>
            <person name="Hayashizaki Y."/>
            <person name="Johnson-Hopson C."/>
            <person name="Hsuan V.W."/>
            <person name="Iida K."/>
            <person name="Karnes M."/>
            <person name="Khan S."/>
            <person name="Koesema E."/>
            <person name="Ishida J."/>
            <person name="Jiang P.X."/>
            <person name="Jones T."/>
            <person name="Kawai J."/>
            <person name="Kamiya A."/>
            <person name="Meyers C."/>
            <person name="Nakajima M."/>
            <person name="Narusaka M."/>
            <person name="Seki M."/>
            <person name="Sakurai T."/>
            <person name="Satou M."/>
            <person name="Tamse R."/>
            <person name="Vaysberg M."/>
            <person name="Wallender E.K."/>
            <person name="Wong C."/>
            <person name="Yamamura Y."/>
            <person name="Yuan S."/>
            <person name="Shinozaki K."/>
            <person name="Davis R.W."/>
            <person name="Theologis A."/>
            <person name="Ecker J.R."/>
        </authorList>
    </citation>
    <scope>NUCLEOTIDE SEQUENCE [LARGE SCALE MRNA]</scope>
    <source>
        <strain>cv. Columbia</strain>
    </source>
</reference>
<reference key="4">
    <citation type="journal article" date="2007" name="FEBS Lett.">
        <title>Nitrate transporters and peptide transporters.</title>
        <authorList>
            <person name="Tsay Y.F."/>
            <person name="Chiu C.C."/>
            <person name="Tsai C.B."/>
            <person name="Ho C.H."/>
            <person name="Hsu P.K."/>
        </authorList>
    </citation>
    <scope>TISSUE SPECIFICITY</scope>
    <scope>GENE FAMILY</scope>
</reference>
<reference key="5">
    <citation type="journal article" date="2010" name="Plant Cell">
        <title>The Arabidopsis nitrate transporter NRT1.8 functions in nitrate removal from the xylem sap and mediates cadmium tolerance.</title>
        <authorList>
            <person name="Li J.Y."/>
            <person name="Fu Y.L."/>
            <person name="Pike S.M."/>
            <person name="Bao J."/>
            <person name="Tian W."/>
            <person name="Zhang Y."/>
            <person name="Chen C.Z."/>
            <person name="Zhang Y."/>
            <person name="Li H.M."/>
            <person name="Huang J."/>
            <person name="Li L.G."/>
            <person name="Schroeder J.I."/>
            <person name="Gassmann W."/>
            <person name="Gong J.M."/>
        </authorList>
    </citation>
    <scope>GENE FAMILY</scope>
</reference>
<reference key="6">
    <citation type="journal article" date="2014" name="Trends Plant Sci.">
        <title>A unified nomenclature of NITRATE TRANSPORTER 1/PEPTIDE TRANSPORTER family members in plants.</title>
        <authorList>
            <person name="Leran S."/>
            <person name="Varala K."/>
            <person name="Boyer J.C."/>
            <person name="Chiurazzi M."/>
            <person name="Crawford N."/>
            <person name="Daniel-Vedele F."/>
            <person name="David L."/>
            <person name="Dickstein R."/>
            <person name="Fernandez E."/>
            <person name="Forde B."/>
            <person name="Gassmann W."/>
            <person name="Geiger D."/>
            <person name="Gojon A."/>
            <person name="Gong J.M."/>
            <person name="Halkier B.A."/>
            <person name="Harris J.M."/>
            <person name="Hedrich R."/>
            <person name="Limami A.M."/>
            <person name="Rentsch D."/>
            <person name="Seo M."/>
            <person name="Tsay Y.F."/>
            <person name="Zhang M."/>
            <person name="Coruzzi G."/>
            <person name="Lacombe B."/>
        </authorList>
    </citation>
    <scope>GENE FAMILY</scope>
    <scope>NOMENCLATURE</scope>
</reference>
<keyword id="KW-0472">Membrane</keyword>
<keyword id="KW-0597">Phosphoprotein</keyword>
<keyword id="KW-1185">Reference proteome</keyword>
<keyword id="KW-0812">Transmembrane</keyword>
<keyword id="KW-1133">Transmembrane helix</keyword>
<keyword id="KW-0813">Transport</keyword>
<sequence>MVASEIKSPVSVPETPGSSSVHHRKQLSVFFIESDNRRLALGRGYTGGTTPVNIHGKPIANLSKTGGWIAAFFIFGNEMAERMAYFGLSVNMVAFMFYVMHRPFESSSNAVNNFLGISQASSVLGGFLADAYLGRYWTIAIFTTMYLVGLIGITLGASLKMFVPDQSNCGQLSLLLGNCEEAKSWQMLYLYTVLYITGFGAAGIRPCVSSFGADQFDEKSKDYKTHLDRFFNFFYLSVTLGAIIAFTLVVYVQMELGWGMAFGTLAVAMGISNALFFAGTPLYRHRLPGGSPLTRVAQVLVAAFRKRNAAFTSSEFIGLYEVPGLKSAINGSRKIPHSNDFIWLDKAALELKEDGLEPSPWKLCTVTQVEEVKILIRLIPIPTCTIMLSLVLTEYLTLSVQQAYTLNTHIQHLKLPVTCMPVFPGLSIFLILSLYYSVFVPITRRITGNPHGASQLQRVGIGLAVSIISVAWAGLFENYRRHYAIQNGFEFNFLTQMPDLTAYWLLIQYCLIGIAEVFCIVGLLEFLYEEAPDAMKSIGSAYAALAGGLGCFAATILNNIVKAATRDSDGKSWLSQNINTGRFDCLYWLLTLLSFLNFCVFLWSAHRYKYRAIESEEDKSSAVL</sequence>